<sequence>MVSGRGLVVTAKMLNAKKKELQDLLDVRIPENSREIGRALELGDLRENAEYKAAREEQTRLNNMVTRLQEEIERAQVFDPTTVVAGRVSFGTVISLKNHTSGEDETYTILGPWESAPERGIISYMSPLGSNLLNRKTGEQLAFTVGEHEKVYEILSISAAEI</sequence>
<dbReference type="EMBL" id="AE000520">
    <property type="protein sequence ID" value="AAC65015.1"/>
    <property type="molecule type" value="Genomic_DNA"/>
</dbReference>
<dbReference type="PIR" id="G71375">
    <property type="entry name" value="G71375"/>
</dbReference>
<dbReference type="SMR" id="O83063"/>
<dbReference type="IntAct" id="O83063">
    <property type="interactions" value="9"/>
</dbReference>
<dbReference type="STRING" id="243276.TP_0019"/>
<dbReference type="EnsemblBacteria" id="AAC65015">
    <property type="protein sequence ID" value="AAC65015"/>
    <property type="gene ID" value="TP_0019"/>
</dbReference>
<dbReference type="KEGG" id="tpa:TP_0019"/>
<dbReference type="HOGENOM" id="CLU_101379_2_1_12"/>
<dbReference type="Proteomes" id="UP000000811">
    <property type="component" value="Chromosome"/>
</dbReference>
<dbReference type="GO" id="GO:0003677">
    <property type="term" value="F:DNA binding"/>
    <property type="evidence" value="ECO:0007669"/>
    <property type="project" value="UniProtKB-UniRule"/>
</dbReference>
<dbReference type="GO" id="GO:0070063">
    <property type="term" value="F:RNA polymerase binding"/>
    <property type="evidence" value="ECO:0007669"/>
    <property type="project" value="InterPro"/>
</dbReference>
<dbReference type="GO" id="GO:0006354">
    <property type="term" value="P:DNA-templated transcription elongation"/>
    <property type="evidence" value="ECO:0007669"/>
    <property type="project" value="TreeGrafter"/>
</dbReference>
<dbReference type="GO" id="GO:0032784">
    <property type="term" value="P:regulation of DNA-templated transcription elongation"/>
    <property type="evidence" value="ECO:0007669"/>
    <property type="project" value="UniProtKB-UniRule"/>
</dbReference>
<dbReference type="FunFam" id="1.10.287.180:FF:000001">
    <property type="entry name" value="Transcription elongation factor GreA"/>
    <property type="match status" value="1"/>
</dbReference>
<dbReference type="Gene3D" id="3.10.50.30">
    <property type="entry name" value="Transcription elongation factor, GreA/GreB, C-terminal domain"/>
    <property type="match status" value="1"/>
</dbReference>
<dbReference type="Gene3D" id="1.10.287.180">
    <property type="entry name" value="Transcription elongation factor, GreA/GreB, N-terminal domain"/>
    <property type="match status" value="1"/>
</dbReference>
<dbReference type="HAMAP" id="MF_00105">
    <property type="entry name" value="GreA_GreB"/>
    <property type="match status" value="1"/>
</dbReference>
<dbReference type="InterPro" id="IPR036953">
    <property type="entry name" value="GreA/GreB_C_sf"/>
</dbReference>
<dbReference type="InterPro" id="IPR018151">
    <property type="entry name" value="TF_GreA/GreB_CS"/>
</dbReference>
<dbReference type="InterPro" id="IPR006359">
    <property type="entry name" value="Tscrpt_elong_fac_GreA"/>
</dbReference>
<dbReference type="InterPro" id="IPR028624">
    <property type="entry name" value="Tscrpt_elong_fac_GreA/B"/>
</dbReference>
<dbReference type="InterPro" id="IPR001437">
    <property type="entry name" value="Tscrpt_elong_fac_GreA/B_C"/>
</dbReference>
<dbReference type="InterPro" id="IPR023459">
    <property type="entry name" value="Tscrpt_elong_fac_GreA/B_fam"/>
</dbReference>
<dbReference type="InterPro" id="IPR022691">
    <property type="entry name" value="Tscrpt_elong_fac_GreA/B_N"/>
</dbReference>
<dbReference type="InterPro" id="IPR036805">
    <property type="entry name" value="Tscrpt_elong_fac_GreA/B_N_sf"/>
</dbReference>
<dbReference type="NCBIfam" id="TIGR01462">
    <property type="entry name" value="greA"/>
    <property type="match status" value="1"/>
</dbReference>
<dbReference type="PANTHER" id="PTHR30437">
    <property type="entry name" value="TRANSCRIPTION ELONGATION FACTOR GREA"/>
    <property type="match status" value="1"/>
</dbReference>
<dbReference type="PANTHER" id="PTHR30437:SF4">
    <property type="entry name" value="TRANSCRIPTION ELONGATION FACTOR GREA"/>
    <property type="match status" value="1"/>
</dbReference>
<dbReference type="Pfam" id="PF01272">
    <property type="entry name" value="GreA_GreB"/>
    <property type="match status" value="1"/>
</dbReference>
<dbReference type="Pfam" id="PF03449">
    <property type="entry name" value="GreA_GreB_N"/>
    <property type="match status" value="1"/>
</dbReference>
<dbReference type="PIRSF" id="PIRSF006092">
    <property type="entry name" value="GreA_GreB"/>
    <property type="match status" value="1"/>
</dbReference>
<dbReference type="SUPFAM" id="SSF54534">
    <property type="entry name" value="FKBP-like"/>
    <property type="match status" value="1"/>
</dbReference>
<dbReference type="SUPFAM" id="SSF46557">
    <property type="entry name" value="GreA transcript cleavage protein, N-terminal domain"/>
    <property type="match status" value="1"/>
</dbReference>
<dbReference type="PROSITE" id="PS00829">
    <property type="entry name" value="GREAB_1"/>
    <property type="match status" value="1"/>
</dbReference>
<dbReference type="PROSITE" id="PS00830">
    <property type="entry name" value="GREAB_2"/>
    <property type="match status" value="1"/>
</dbReference>
<gene>
    <name evidence="1" type="primary">greA</name>
    <name type="ordered locus">TP_0019</name>
</gene>
<feature type="chain" id="PRO_0000176987" description="Transcription elongation factor GreA">
    <location>
        <begin position="1"/>
        <end position="162"/>
    </location>
</feature>
<feature type="coiled-coil region" evidence="1">
    <location>
        <begin position="46"/>
        <end position="77"/>
    </location>
</feature>
<reference key="1">
    <citation type="journal article" date="1998" name="Science">
        <title>Complete genome sequence of Treponema pallidum, the syphilis spirochete.</title>
        <authorList>
            <person name="Fraser C.M."/>
            <person name="Norris S.J."/>
            <person name="Weinstock G.M."/>
            <person name="White O."/>
            <person name="Sutton G.G."/>
            <person name="Dodson R.J."/>
            <person name="Gwinn M.L."/>
            <person name="Hickey E.K."/>
            <person name="Clayton R.A."/>
            <person name="Ketchum K.A."/>
            <person name="Sodergren E."/>
            <person name="Hardham J.M."/>
            <person name="McLeod M.P."/>
            <person name="Salzberg S.L."/>
            <person name="Peterson J.D."/>
            <person name="Khalak H.G."/>
            <person name="Richardson D.L."/>
            <person name="Howell J.K."/>
            <person name="Chidambaram M."/>
            <person name="Utterback T.R."/>
            <person name="McDonald L.A."/>
            <person name="Artiach P."/>
            <person name="Bowman C."/>
            <person name="Cotton M.D."/>
            <person name="Fujii C."/>
            <person name="Garland S.A."/>
            <person name="Hatch B."/>
            <person name="Horst K."/>
            <person name="Roberts K.M."/>
            <person name="Sandusky M."/>
            <person name="Weidman J.F."/>
            <person name="Smith H.O."/>
            <person name="Venter J.C."/>
        </authorList>
    </citation>
    <scope>NUCLEOTIDE SEQUENCE [LARGE SCALE GENOMIC DNA]</scope>
    <source>
        <strain>Nichols</strain>
    </source>
</reference>
<proteinExistence type="inferred from homology"/>
<organism>
    <name type="scientific">Treponema pallidum (strain Nichols)</name>
    <dbReference type="NCBI Taxonomy" id="243276"/>
    <lineage>
        <taxon>Bacteria</taxon>
        <taxon>Pseudomonadati</taxon>
        <taxon>Spirochaetota</taxon>
        <taxon>Spirochaetia</taxon>
        <taxon>Spirochaetales</taxon>
        <taxon>Treponemataceae</taxon>
        <taxon>Treponema</taxon>
    </lineage>
</organism>
<protein>
    <recommendedName>
        <fullName evidence="1">Transcription elongation factor GreA</fullName>
    </recommendedName>
    <alternativeName>
        <fullName evidence="1">Transcript cleavage factor GreA</fullName>
    </alternativeName>
</protein>
<accession>O83063</accession>
<name>GREA_TREPA</name>
<keyword id="KW-0175">Coiled coil</keyword>
<keyword id="KW-0238">DNA-binding</keyword>
<keyword id="KW-1185">Reference proteome</keyword>
<keyword id="KW-0804">Transcription</keyword>
<keyword id="KW-0805">Transcription regulation</keyword>
<comment type="function">
    <text evidence="1">Necessary for efficient RNA polymerase transcription elongation past template-encoded arresting sites. The arresting sites in DNA have the property of trapping a certain fraction of elongating RNA polymerases that pass through, resulting in locked ternary complexes. Cleavage of the nascent transcript by cleavage factors such as GreA or GreB allows the resumption of elongation from the new 3'terminus. GreA releases sequences of 2 to 3 nucleotides.</text>
</comment>
<comment type="similarity">
    <text evidence="1">Belongs to the GreA/GreB family.</text>
</comment>
<evidence type="ECO:0000255" key="1">
    <source>
        <dbReference type="HAMAP-Rule" id="MF_00105"/>
    </source>
</evidence>